<keyword id="KW-0085">Behavior</keyword>
<keyword id="KW-1003">Cell membrane</keyword>
<keyword id="KW-0966">Cell projection</keyword>
<keyword id="KW-0325">Glycoprotein</keyword>
<keyword id="KW-0407">Ion channel</keyword>
<keyword id="KW-0406">Ion transport</keyword>
<keyword id="KW-1071">Ligand-gated ion channel</keyword>
<keyword id="KW-0472">Membrane</keyword>
<keyword id="KW-0675">Receptor</keyword>
<keyword id="KW-1185">Reference proteome</keyword>
<keyword id="KW-0732">Signal</keyword>
<keyword id="KW-0812">Transmembrane</keyword>
<keyword id="KW-1133">Transmembrane helix</keyword>
<keyword id="KW-0813">Transport</keyword>
<protein>
    <recommendedName>
        <fullName evidence="5">Ionotropic receptor 21a</fullName>
    </recommendedName>
</protein>
<feature type="signal peptide" evidence="1">
    <location>
        <begin position="1"/>
        <end position="21"/>
    </location>
</feature>
<feature type="chain" id="PRO_5010273893" description="Ionotropic receptor 21a" evidence="1">
    <location>
        <begin position="22"/>
        <end position="975"/>
    </location>
</feature>
<feature type="transmembrane region" description="Helical" evidence="1">
    <location>
        <begin position="433"/>
        <end position="453"/>
    </location>
</feature>
<feature type="transmembrane region" description="Helical" evidence="1">
    <location>
        <begin position="505"/>
        <end position="525"/>
    </location>
</feature>
<feature type="transmembrane region" description="Helical" evidence="1">
    <location>
        <begin position="708"/>
        <end position="728"/>
    </location>
</feature>
<feature type="region of interest" description="Disordered" evidence="3">
    <location>
        <begin position="757"/>
        <end position="839"/>
    </location>
</feature>
<feature type="region of interest" description="Disordered" evidence="3">
    <location>
        <begin position="911"/>
        <end position="938"/>
    </location>
</feature>
<feature type="compositionally biased region" description="Polar residues" evidence="3">
    <location>
        <begin position="760"/>
        <end position="777"/>
    </location>
</feature>
<feature type="compositionally biased region" description="Polar residues" evidence="3">
    <location>
        <begin position="788"/>
        <end position="800"/>
    </location>
</feature>
<feature type="glycosylation site" description="N-linked (GlcNAc...) asparagine" evidence="2">
    <location>
        <position position="67"/>
    </location>
</feature>
<feature type="glycosylation site" description="N-linked (GlcNAc...) asparagine" evidence="2">
    <location>
        <position position="177"/>
    </location>
</feature>
<feature type="glycosylation site" description="N-linked (GlcNAc...) asparagine" evidence="2">
    <location>
        <position position="355"/>
    </location>
</feature>
<feature type="glycosylation site" description="N-linked (GlcNAc...) asparagine" evidence="2">
    <location>
        <position position="464"/>
    </location>
</feature>
<feature type="glycosylation site" description="N-linked (GlcNAc...) asparagine" evidence="2">
    <location>
        <position position="561"/>
    </location>
</feature>
<feature type="glycosylation site" description="N-linked (GlcNAc...) asparagine" evidence="2">
    <location>
        <position position="586"/>
    </location>
</feature>
<feature type="glycosylation site" description="N-linked (GlcNAc...) asparagine" evidence="2">
    <location>
        <position position="611"/>
    </location>
</feature>
<feature type="glycosylation site" description="N-linked (GlcNAc...) asparagine" evidence="2">
    <location>
        <position position="763"/>
    </location>
</feature>
<feature type="glycosylation site" description="N-linked (GlcNAc...) asparagine" evidence="2">
    <location>
        <position position="797"/>
    </location>
</feature>
<dbReference type="EMBL" id="AAAB01008964">
    <property type="status" value="NOT_ANNOTATED_CDS"/>
    <property type="molecule type" value="Genomic_DNA"/>
</dbReference>
<dbReference type="FunCoup" id="A0A1S4GYH6">
    <property type="interactions" value="12"/>
</dbReference>
<dbReference type="GlyCosmos" id="A0A1S4GYH6">
    <property type="glycosylation" value="9 sites, No reported glycans"/>
</dbReference>
<dbReference type="EnsemblMetazoa" id="AGAP008511-RA">
    <property type="protein sequence ID" value="AGAP008511-PA"/>
    <property type="gene ID" value="AGAP008511"/>
</dbReference>
<dbReference type="VEuPathDB" id="VectorBase:AGAMI1_006843"/>
<dbReference type="VEuPathDB" id="VectorBase:AGAP008511"/>
<dbReference type="InParanoid" id="A0A1S4GYH6"/>
<dbReference type="OMA" id="PPYIFRI"/>
<dbReference type="Proteomes" id="UP000007062">
    <property type="component" value="Chromosome 3R"/>
</dbReference>
<dbReference type="GO" id="GO:0060170">
    <property type="term" value="C:ciliary membrane"/>
    <property type="evidence" value="ECO:0000314"/>
    <property type="project" value="UniProtKB"/>
</dbReference>
<dbReference type="GO" id="GO:0005886">
    <property type="term" value="C:plasma membrane"/>
    <property type="evidence" value="ECO:0000318"/>
    <property type="project" value="GO_Central"/>
</dbReference>
<dbReference type="GO" id="GO:0098839">
    <property type="term" value="C:postsynaptic density membrane"/>
    <property type="evidence" value="ECO:0000318"/>
    <property type="project" value="GO_Central"/>
</dbReference>
<dbReference type="GO" id="GO:0008066">
    <property type="term" value="F:glutamate receptor activity"/>
    <property type="evidence" value="ECO:0000318"/>
    <property type="project" value="GO_Central"/>
</dbReference>
<dbReference type="GO" id="GO:1904315">
    <property type="term" value="F:transmitter-gated monoatomic ion channel activity involved in regulation of postsynaptic membrane potential"/>
    <property type="evidence" value="ECO:0000318"/>
    <property type="project" value="GO_Central"/>
</dbReference>
<dbReference type="GO" id="GO:0050961">
    <property type="term" value="P:detection of temperature stimulus involved in sensory perception"/>
    <property type="evidence" value="ECO:0000315"/>
    <property type="project" value="UniProtKB"/>
</dbReference>
<dbReference type="GO" id="GO:0050804">
    <property type="term" value="P:modulation of chemical synaptic transmission"/>
    <property type="evidence" value="ECO:0000318"/>
    <property type="project" value="GO_Central"/>
</dbReference>
<dbReference type="GO" id="GO:0035249">
    <property type="term" value="P:synaptic transmission, glutamatergic"/>
    <property type="evidence" value="ECO:0000318"/>
    <property type="project" value="GO_Central"/>
</dbReference>
<dbReference type="GO" id="GO:0040040">
    <property type="term" value="P:thermosensory behavior"/>
    <property type="evidence" value="ECO:0000315"/>
    <property type="project" value="UniProtKB"/>
</dbReference>
<dbReference type="FunFam" id="3.40.190.10:FF:000438">
    <property type="entry name" value="Ionotropic receptor IR21a"/>
    <property type="match status" value="1"/>
</dbReference>
<dbReference type="Gene3D" id="1.10.287.70">
    <property type="match status" value="1"/>
</dbReference>
<dbReference type="Gene3D" id="3.40.190.10">
    <property type="entry name" value="Periplasmic binding protein-like II"/>
    <property type="match status" value="1"/>
</dbReference>
<dbReference type="InterPro" id="IPR019594">
    <property type="entry name" value="Glu/Gly-bd"/>
</dbReference>
<dbReference type="InterPro" id="IPR052192">
    <property type="entry name" value="Insect_Ionotropic_Sensory_Rcpt"/>
</dbReference>
<dbReference type="InterPro" id="IPR001320">
    <property type="entry name" value="Iontro_rcpt_C"/>
</dbReference>
<dbReference type="PANTHER" id="PTHR42643">
    <property type="entry name" value="IONOTROPIC RECEPTOR 20A-RELATED"/>
    <property type="match status" value="1"/>
</dbReference>
<dbReference type="PANTHER" id="PTHR42643:SF24">
    <property type="entry name" value="IONOTROPIC RECEPTOR 60A"/>
    <property type="match status" value="1"/>
</dbReference>
<dbReference type="Pfam" id="PF00060">
    <property type="entry name" value="Lig_chan"/>
    <property type="match status" value="1"/>
</dbReference>
<dbReference type="SMART" id="SM00918">
    <property type="entry name" value="Lig_chan-Glu_bd"/>
    <property type="match status" value="1"/>
</dbReference>
<dbReference type="SUPFAM" id="SSF53850">
    <property type="entry name" value="Periplasmic binding protein-like II"/>
    <property type="match status" value="1"/>
</dbReference>
<gene>
    <name evidence="5" type="primary">Ir21a</name>
    <name evidence="7" type="ORF">AGAP008511</name>
</gene>
<organism evidence="7">
    <name type="scientific">Anopheles gambiae</name>
    <name type="common">African malaria mosquito</name>
    <dbReference type="NCBI Taxonomy" id="7165"/>
    <lineage>
        <taxon>Eukaryota</taxon>
        <taxon>Metazoa</taxon>
        <taxon>Ecdysozoa</taxon>
        <taxon>Arthropoda</taxon>
        <taxon>Hexapoda</taxon>
        <taxon>Insecta</taxon>
        <taxon>Pterygota</taxon>
        <taxon>Neoptera</taxon>
        <taxon>Endopterygota</taxon>
        <taxon>Diptera</taxon>
        <taxon>Nematocera</taxon>
        <taxon>Culicoidea</taxon>
        <taxon>Culicidae</taxon>
        <taxon>Anophelinae</taxon>
        <taxon>Anopheles</taxon>
    </lineage>
</organism>
<reference evidence="7" key="1">
    <citation type="journal article" date="2002" name="Science">
        <title>The genome sequence of the malaria mosquito Anopheles gambiae.</title>
        <authorList>
            <person name="Holt R.A."/>
            <person name="Subramanian G.M."/>
            <person name="Halpern A."/>
            <person name="Sutton G.G."/>
            <person name="Charlab R."/>
            <person name="Nusskern D.R."/>
            <person name="Wincker P."/>
            <person name="Clark A.G."/>
            <person name="Ribeiro J.M.C."/>
            <person name="Wides R."/>
            <person name="Salzberg S.L."/>
            <person name="Loftus B.J."/>
            <person name="Yandell M.D."/>
            <person name="Majoros W.H."/>
            <person name="Rusch D.B."/>
            <person name="Lai Z."/>
            <person name="Kraft C.L."/>
            <person name="Abril J.F."/>
            <person name="Anthouard V."/>
            <person name="Arensburger P."/>
            <person name="Atkinson P.W."/>
            <person name="Baden H."/>
            <person name="de Berardinis V."/>
            <person name="Baldwin D."/>
            <person name="Benes V."/>
            <person name="Biedler J."/>
            <person name="Blass C."/>
            <person name="Bolanos R."/>
            <person name="Boscus D."/>
            <person name="Barnstead M."/>
            <person name="Cai S."/>
            <person name="Center A."/>
            <person name="Chaturverdi K."/>
            <person name="Christophides G.K."/>
            <person name="Chrystal M.A.M."/>
            <person name="Clamp M."/>
            <person name="Cravchik A."/>
            <person name="Curwen V."/>
            <person name="Dana A."/>
            <person name="Delcher A."/>
            <person name="Dew I."/>
            <person name="Evans C.A."/>
            <person name="Flanigan M."/>
            <person name="Grundschober-Freimoser A."/>
            <person name="Friedli L."/>
            <person name="Gu Z."/>
            <person name="Guan P."/>
            <person name="Guigo R."/>
            <person name="Hillenmeyer M.E."/>
            <person name="Hladun S.L."/>
            <person name="Hogan J.R."/>
            <person name="Hong Y.S."/>
            <person name="Hoover J."/>
            <person name="Jaillon O."/>
            <person name="Ke Z."/>
            <person name="Kodira C.D."/>
            <person name="Kokoza E."/>
            <person name="Koutsos A."/>
            <person name="Letunic I."/>
            <person name="Levitsky A.A."/>
            <person name="Liang Y."/>
            <person name="Lin J.-J."/>
            <person name="Lobo N.F."/>
            <person name="Lopez J.R."/>
            <person name="Malek J.A."/>
            <person name="McIntosh T.C."/>
            <person name="Meister S."/>
            <person name="Miller J.R."/>
            <person name="Mobarry C."/>
            <person name="Mongin E."/>
            <person name="Murphy S.D."/>
            <person name="O'Brochta D.A."/>
            <person name="Pfannkoch C."/>
            <person name="Qi R."/>
            <person name="Regier M.A."/>
            <person name="Remington K."/>
            <person name="Shao H."/>
            <person name="Sharakhova M.V."/>
            <person name="Sitter C.D."/>
            <person name="Shetty J."/>
            <person name="Smith T.J."/>
            <person name="Strong R."/>
            <person name="Sun J."/>
            <person name="Thomasova D."/>
            <person name="Ton L.Q."/>
            <person name="Topalis P."/>
            <person name="Tu Z.J."/>
            <person name="Unger M.F."/>
            <person name="Walenz B."/>
            <person name="Wang A.H."/>
            <person name="Wang J."/>
            <person name="Wang M."/>
            <person name="Wang X."/>
            <person name="Woodford K.J."/>
            <person name="Wortman J.R."/>
            <person name="Wu M."/>
            <person name="Yao A."/>
            <person name="Zdobnov E.M."/>
            <person name="Zhang H."/>
            <person name="Zhao Q."/>
            <person name="Zhao S."/>
            <person name="Zhu S.C."/>
            <person name="Zhimulev I."/>
            <person name="Coluzzi M."/>
            <person name="della Torre A."/>
            <person name="Roth C.W."/>
            <person name="Louis C."/>
            <person name="Kalush F."/>
            <person name="Mural R.J."/>
            <person name="Myers E.W."/>
            <person name="Adams M.D."/>
            <person name="Smith H.O."/>
            <person name="Broder S."/>
            <person name="Gardner M.J."/>
            <person name="Fraser C.M."/>
            <person name="Birney E."/>
            <person name="Bork P."/>
            <person name="Brey P.T."/>
            <person name="Venter J.C."/>
            <person name="Weissenbach J."/>
            <person name="Kafatos F.C."/>
            <person name="Collins F.H."/>
            <person name="Hoffman S.L."/>
        </authorList>
    </citation>
    <scope>NUCLEOTIDE SEQUENCE [LARGE SCALE GENOMIC DNA]</scope>
    <source>
        <strain evidence="7">PEST</strain>
    </source>
</reference>
<reference evidence="6" key="2">
    <citation type="journal article" date="2020" name="Science">
        <title>Mosquito heat seeking is driven by an ancestral cooling receptor.</title>
        <authorList>
            <person name="Greppi C."/>
            <person name="Laursen W.J."/>
            <person name="Budelli G."/>
            <person name="Chang E.C."/>
            <person name="Daniels A.M."/>
            <person name="van Giesen L."/>
            <person name="Smidler A.L."/>
            <person name="Catteruccia F."/>
            <person name="Garrity P.A."/>
        </authorList>
    </citation>
    <scope>FUNCTION</scope>
    <scope>SUBCELLULAR LOCATION</scope>
    <scope>TISSUE SPECIFICITY</scope>
</reference>
<accession>A0A1S4GYH6</accession>
<name>IR21A_ANOGA</name>
<evidence type="ECO:0000255" key="1"/>
<evidence type="ECO:0000255" key="2">
    <source>
        <dbReference type="PROSITE-ProRule" id="PRU00498"/>
    </source>
</evidence>
<evidence type="ECO:0000256" key="3">
    <source>
        <dbReference type="SAM" id="MobiDB-lite"/>
    </source>
</evidence>
<evidence type="ECO:0000269" key="4">
    <source>
    </source>
</evidence>
<evidence type="ECO:0000303" key="5">
    <source>
    </source>
</evidence>
<evidence type="ECO:0000305" key="6"/>
<evidence type="ECO:0000312" key="7">
    <source>
        <dbReference type="EMBL" id="AAAB01008964"/>
    </source>
</evidence>
<comment type="function">
    <text evidence="4">Integral part of a neural sensory system in the antenna that provides the neural basis for the response to environmental changes in temperature (thermosensation) (PubMed:32029627). Specifically, required for thermosensing by the cooling cell (PubMed:32029627). Plays a role in heat seeking and heat-stimulated blood feeding behavior (PubMed:32029627).</text>
</comment>
<comment type="subcellular location">
    <subcellularLocation>
        <location evidence="4">Cell projection</location>
        <location evidence="4">Cilium membrane</location>
        <topology evidence="1">Multi-pass membrane protein</topology>
    </subcellularLocation>
</comment>
<comment type="tissue specificity">
    <text evidence="4">In both female and male antenna, expressed specifically in 3 sensory neurons of flagellomere 13 segment (at protein level).</text>
</comment>
<comment type="similarity">
    <text evidence="6">Belongs to the glutamate-gated ion channel (TC 1.A.10.1) family.</text>
</comment>
<proteinExistence type="evidence at protein level"/>
<sequence>MFKRIVLAVINLVFLIVSTTAFASLHYPESFNQQLIRYKGRDSSNGYFELASEAYYTGTYDLVEELNETATCLRADCREQSNSSPVVRDRRRVDPTFYGHPKTREQIWERNFAHVIEDNRQTLSLVTLLNKIILKYLHSCIPIVLFDTYVATTENYMLEALFSDFPITYITGRIGPNYTLDNPGILEPTGPQCRSYIIFLADVMMTRKVIGPQMNSYVVLIPRSSQWKLQEFLAAKQSRDIINLLVIGESYSVDKRINNEQPYVLYTHELYIDGLGANRPQVLTSWIGNKFSRNNVNLFPRKLRKGFSGHRFTVKAAHQPPFMIKRLSTDGVGNVNIRWEGLEMRLLRVMAQYLNFTYDIIEPGRTELGPGDAVVEEIKRGQGDMGLAGIYVTIERNLATEMSVSHSTDCAAFLTLMSSALPRYRAILGPFQWPVWVAVILIYLLAIFPLAFSDKMTLRHLLGNWSEIENMFWYVFGTFTNSLTFQGENSWSNTRKTSTRMLIGIYWVFTIIITACYTGSIIAFITLPVEPERIDGIEQLSRGFFRVGTLDRGGWERWFLNSSHKQTNKLLKDLRFVSSVDEGIRNVTEAFLISYAFIGSKGELEFLIKSNLSHQFENKRYGLHVSRECFALYGVSMVFPPNSVHRDPINNAILYMQEAGLIGKLNRDVTWETMKTKDGRRKEASVGEVLRSTAPSERGLTLADTEGMFLLMLFGYVVALGVLISEWVGGCTNKCREVLKERAERLKAAAAEIAAAATAGSDNGSLPVSSPTSTNRNSPHKRTGPNGVENSLPASGNGSATVRRIRLTGEDSENEPNEYDVPPDAASDGGSSLQRHSLSECLSEVSAHTMQDLYNGPDRRHSTIVFLDGQLMSEEEAQRKVARSKSRHRHSLSSVLEREVSQLFRFLGKESPHSARADESSDAGGLVRRGAGRERKEMKVAVEINARATEEGQQGPGAAVGRRSIEATFGEKLLH</sequence>